<proteinExistence type="evidence at protein level"/>
<organism>
    <name type="scientific">Oryctolagus cuniculus</name>
    <name type="common">Rabbit</name>
    <dbReference type="NCBI Taxonomy" id="9986"/>
    <lineage>
        <taxon>Eukaryota</taxon>
        <taxon>Metazoa</taxon>
        <taxon>Chordata</taxon>
        <taxon>Craniata</taxon>
        <taxon>Vertebrata</taxon>
        <taxon>Euteleostomi</taxon>
        <taxon>Mammalia</taxon>
        <taxon>Eutheria</taxon>
        <taxon>Euarchontoglires</taxon>
        <taxon>Glires</taxon>
        <taxon>Lagomorpha</taxon>
        <taxon>Leporidae</taxon>
        <taxon>Oryctolagus</taxon>
    </lineage>
</organism>
<dbReference type="PIR" id="A01946">
    <property type="entry name" value="KVRB31"/>
</dbReference>
<dbReference type="SMR" id="P01683"/>
<dbReference type="FunCoup" id="P01683">
    <property type="interactions" value="277"/>
</dbReference>
<dbReference type="STRING" id="9986.ENSOCUP00000018887"/>
<dbReference type="InParanoid" id="P01683"/>
<dbReference type="Proteomes" id="UP000001811">
    <property type="component" value="Unplaced"/>
</dbReference>
<dbReference type="GO" id="GO:0019814">
    <property type="term" value="C:immunoglobulin complex"/>
    <property type="evidence" value="ECO:0007669"/>
    <property type="project" value="UniProtKB-KW"/>
</dbReference>
<dbReference type="GO" id="GO:0002250">
    <property type="term" value="P:adaptive immune response"/>
    <property type="evidence" value="ECO:0007669"/>
    <property type="project" value="UniProtKB-KW"/>
</dbReference>
<dbReference type="FunFam" id="2.60.40.10:FF:000350">
    <property type="entry name" value="Immunoglobulin kappa chain variable 18-36"/>
    <property type="match status" value="1"/>
</dbReference>
<dbReference type="Gene3D" id="2.60.40.10">
    <property type="entry name" value="Immunoglobulins"/>
    <property type="match status" value="1"/>
</dbReference>
<dbReference type="InterPro" id="IPR007110">
    <property type="entry name" value="Ig-like_dom"/>
</dbReference>
<dbReference type="InterPro" id="IPR036179">
    <property type="entry name" value="Ig-like_dom_sf"/>
</dbReference>
<dbReference type="InterPro" id="IPR013783">
    <property type="entry name" value="Ig-like_fold"/>
</dbReference>
<dbReference type="InterPro" id="IPR003599">
    <property type="entry name" value="Ig_sub"/>
</dbReference>
<dbReference type="InterPro" id="IPR013106">
    <property type="entry name" value="Ig_V-set"/>
</dbReference>
<dbReference type="InterPro" id="IPR050150">
    <property type="entry name" value="IgV_Light_Chain"/>
</dbReference>
<dbReference type="PANTHER" id="PTHR23267">
    <property type="entry name" value="IMMUNOGLOBULIN LIGHT CHAIN"/>
    <property type="match status" value="1"/>
</dbReference>
<dbReference type="Pfam" id="PF07686">
    <property type="entry name" value="V-set"/>
    <property type="match status" value="1"/>
</dbReference>
<dbReference type="SMART" id="SM00409">
    <property type="entry name" value="IG"/>
    <property type="match status" value="1"/>
</dbReference>
<dbReference type="SMART" id="SM00406">
    <property type="entry name" value="IGv"/>
    <property type="match status" value="1"/>
</dbReference>
<dbReference type="SUPFAM" id="SSF48726">
    <property type="entry name" value="Immunoglobulin"/>
    <property type="match status" value="1"/>
</dbReference>
<dbReference type="PROSITE" id="PS50835">
    <property type="entry name" value="IG_LIKE"/>
    <property type="match status" value="1"/>
</dbReference>
<sequence length="115" mass="12012">AQIVMTQTPSSVSAAVGGTVTINCQSSQSVYENGRLSWFQQKPGQPPKRLIYRASTLASGVSSRFTGSGSGTQFTLSISDVQCDDAATYYCLGNYDCSSGDSFTFGGGTEVVVKG</sequence>
<comment type="miscellaneous">
    <text>This chain was obtained from antibody to type VIII pneumococci and was isolated from the serum of a single rabbit.</text>
</comment>
<accession>P01683</accession>
<feature type="chain" id="PRO_0000059721" description="Ig kappa chain V region 3315">
    <location>
        <begin position="1"/>
        <end position="115" status="greater than"/>
    </location>
</feature>
<feature type="region of interest" description="Framework-1">
    <location>
        <begin position="1"/>
        <end position="24"/>
    </location>
</feature>
<feature type="region of interest" description="Complementarity-determining-1">
    <location>
        <begin position="25"/>
        <end position="37"/>
    </location>
</feature>
<feature type="region of interest" description="Framework-2">
    <location>
        <begin position="38"/>
        <end position="52"/>
    </location>
</feature>
<feature type="region of interest" description="Complementarity-determining-2">
    <location>
        <begin position="53"/>
        <end position="59"/>
    </location>
</feature>
<feature type="region of interest" description="Framework-3">
    <location>
        <begin position="60"/>
        <end position="91"/>
    </location>
</feature>
<feature type="region of interest" description="Complementarity-determining-3">
    <location>
        <begin position="92"/>
        <end position="104"/>
    </location>
</feature>
<feature type="region of interest" description="Framework-4">
    <location>
        <begin position="105"/>
        <end position="114"/>
    </location>
</feature>
<feature type="non-terminal residue">
    <location>
        <position position="115"/>
    </location>
</feature>
<name>KV02_RABIT</name>
<keyword id="KW-1064">Adaptive immunity</keyword>
<keyword id="KW-0903">Direct protein sequencing</keyword>
<keyword id="KW-0391">Immunity</keyword>
<keyword id="KW-1280">Immunoglobulin</keyword>
<keyword id="KW-1185">Reference proteome</keyword>
<protein>
    <recommendedName>
        <fullName>Ig kappa chain V region 3315</fullName>
    </recommendedName>
</protein>
<reference key="1">
    <citation type="journal article" date="1975" name="Proc. Natl. Acad. Sci. U.S.A.">
        <title>Diversity of light chain variable region sequences among rabbit antibodies elicited by the same antigens.</title>
        <authorList>
            <person name="Margolies M.N."/>
            <person name="Cannon L.E. III"/>
            <person name="Strosberg A.D."/>
            <person name="Haber E."/>
        </authorList>
    </citation>
    <scope>PROTEIN SEQUENCE</scope>
</reference>